<keyword id="KW-0489">Methyltransferase</keyword>
<keyword id="KW-0949">S-adenosyl-L-methionine</keyword>
<keyword id="KW-0808">Transferase</keyword>
<keyword id="KW-0819">tRNA processing</keyword>
<protein>
    <recommendedName>
        <fullName evidence="1">tRNA/tmRNA (uracil-C(5))-methyltransferase</fullName>
        <ecNumber evidence="1">2.1.1.-</ecNumber>
        <ecNumber evidence="1">2.1.1.35</ecNumber>
    </recommendedName>
    <alternativeName>
        <fullName evidence="1">tRNA (uracil(54)-C(5))-methyltransferase</fullName>
    </alternativeName>
    <alternativeName>
        <fullName evidence="1">tRNA(m5U54)-methyltransferase</fullName>
        <shortName evidence="1">RUMT</shortName>
    </alternativeName>
    <alternativeName>
        <fullName evidence="1">tmRNA (uracil(341)-C(5))-methyltransferase</fullName>
    </alternativeName>
</protein>
<proteinExistence type="inferred from homology"/>
<dbReference type="EC" id="2.1.1.-" evidence="1"/>
<dbReference type="EC" id="2.1.1.35" evidence="1"/>
<dbReference type="EMBL" id="CP000931">
    <property type="protein sequence ID" value="ABZ78694.1"/>
    <property type="molecule type" value="Genomic_DNA"/>
</dbReference>
<dbReference type="RefSeq" id="WP_012279198.1">
    <property type="nucleotide sequence ID" value="NC_010334.1"/>
</dbReference>
<dbReference type="SMR" id="B0TMV6"/>
<dbReference type="STRING" id="458817.Shal_4154"/>
<dbReference type="KEGG" id="shl:Shal_4154"/>
<dbReference type="eggNOG" id="COG2265">
    <property type="taxonomic scope" value="Bacteria"/>
</dbReference>
<dbReference type="HOGENOM" id="CLU_043022_0_0_6"/>
<dbReference type="OrthoDB" id="9804590at2"/>
<dbReference type="Proteomes" id="UP000001317">
    <property type="component" value="Chromosome"/>
</dbReference>
<dbReference type="GO" id="GO:0005829">
    <property type="term" value="C:cytosol"/>
    <property type="evidence" value="ECO:0007669"/>
    <property type="project" value="TreeGrafter"/>
</dbReference>
<dbReference type="GO" id="GO:0019843">
    <property type="term" value="F:rRNA binding"/>
    <property type="evidence" value="ECO:0007669"/>
    <property type="project" value="TreeGrafter"/>
</dbReference>
<dbReference type="GO" id="GO:0030697">
    <property type="term" value="F:tRNA (uracil(54)-C5)-methyltransferase activity, S-adenosyl methionine-dependent"/>
    <property type="evidence" value="ECO:0007669"/>
    <property type="project" value="UniProtKB-UniRule"/>
</dbReference>
<dbReference type="GO" id="GO:0000049">
    <property type="term" value="F:tRNA binding"/>
    <property type="evidence" value="ECO:0007669"/>
    <property type="project" value="TreeGrafter"/>
</dbReference>
<dbReference type="GO" id="GO:0030488">
    <property type="term" value="P:tRNA methylation"/>
    <property type="evidence" value="ECO:0007669"/>
    <property type="project" value="UniProtKB-UniRule"/>
</dbReference>
<dbReference type="CDD" id="cd02440">
    <property type="entry name" value="AdoMet_MTases"/>
    <property type="match status" value="1"/>
</dbReference>
<dbReference type="FunFam" id="2.40.50.1070:FF:000001">
    <property type="entry name" value="tRNA/tmRNA (uracil-C(5))-methyltransferase"/>
    <property type="match status" value="1"/>
</dbReference>
<dbReference type="FunFam" id="3.40.50.150:FF:000012">
    <property type="entry name" value="tRNA/tmRNA (uracil-C(5))-methyltransferase"/>
    <property type="match status" value="1"/>
</dbReference>
<dbReference type="Gene3D" id="2.40.50.1070">
    <property type="match status" value="1"/>
</dbReference>
<dbReference type="Gene3D" id="3.40.50.150">
    <property type="entry name" value="Vaccinia Virus protein VP39"/>
    <property type="match status" value="1"/>
</dbReference>
<dbReference type="HAMAP" id="MF_01011">
    <property type="entry name" value="RNA_methyltr_TrmA"/>
    <property type="match status" value="1"/>
</dbReference>
<dbReference type="InterPro" id="IPR030390">
    <property type="entry name" value="MeTrfase_TrmA_AS"/>
</dbReference>
<dbReference type="InterPro" id="IPR030391">
    <property type="entry name" value="MeTrfase_TrmA_CS"/>
</dbReference>
<dbReference type="InterPro" id="IPR029063">
    <property type="entry name" value="SAM-dependent_MTases_sf"/>
</dbReference>
<dbReference type="InterPro" id="IPR011869">
    <property type="entry name" value="TrmA_MeTrfase"/>
</dbReference>
<dbReference type="InterPro" id="IPR010280">
    <property type="entry name" value="U5_MeTrfase_fam"/>
</dbReference>
<dbReference type="NCBIfam" id="TIGR02143">
    <property type="entry name" value="trmA_only"/>
    <property type="match status" value="1"/>
</dbReference>
<dbReference type="PANTHER" id="PTHR47790">
    <property type="entry name" value="TRNA/TMRNA (URACIL-C(5))-METHYLTRANSFERASE"/>
    <property type="match status" value="1"/>
</dbReference>
<dbReference type="PANTHER" id="PTHR47790:SF2">
    <property type="entry name" value="TRNA_TMRNA (URACIL-C(5))-METHYLTRANSFERASE"/>
    <property type="match status" value="1"/>
</dbReference>
<dbReference type="Pfam" id="PF05958">
    <property type="entry name" value="tRNA_U5-meth_tr"/>
    <property type="match status" value="1"/>
</dbReference>
<dbReference type="SUPFAM" id="SSF53335">
    <property type="entry name" value="S-adenosyl-L-methionine-dependent methyltransferases"/>
    <property type="match status" value="1"/>
</dbReference>
<dbReference type="PROSITE" id="PS51687">
    <property type="entry name" value="SAM_MT_RNA_M5U"/>
    <property type="match status" value="1"/>
</dbReference>
<dbReference type="PROSITE" id="PS01230">
    <property type="entry name" value="TRMA_1"/>
    <property type="match status" value="1"/>
</dbReference>
<dbReference type="PROSITE" id="PS01231">
    <property type="entry name" value="TRMA_2"/>
    <property type="match status" value="1"/>
</dbReference>
<organism>
    <name type="scientific">Shewanella halifaxensis (strain HAW-EB4)</name>
    <dbReference type="NCBI Taxonomy" id="458817"/>
    <lineage>
        <taxon>Bacteria</taxon>
        <taxon>Pseudomonadati</taxon>
        <taxon>Pseudomonadota</taxon>
        <taxon>Gammaproteobacteria</taxon>
        <taxon>Alteromonadales</taxon>
        <taxon>Shewanellaceae</taxon>
        <taxon>Shewanella</taxon>
    </lineage>
</organism>
<accession>B0TMV6</accession>
<evidence type="ECO:0000255" key="1">
    <source>
        <dbReference type="HAMAP-Rule" id="MF_01011"/>
    </source>
</evidence>
<sequence length="365" mass="42196">MNLAAMDPTTYDVQLETKRVKLTQLFADFDTPELETFSSEPAHYRMRAEFRVWHEGEDLYYYMFDKELNSKVRCDQFLPASELINKMMPALVELLKPNTILRHRLFQIDFLSTLSGEILVSLLYHKQLDSEWEQQAKILKQTLSTQFNVNLIGRARKQKIIFDKDFVVESLNVAGKQLQYHQIENSFTQPNGKVSVKMLEWAIDVTKNSTGDLLELYCGNGNFSIALAQNFDRVLATELAKPSVESAQYNIKVNQVENLQIIRMSAEDFTEAMAKKRSFRRLEGIDLDSYNCNTIFVDPPRAGLDADTVKLVQGYERIVYISCNPHTLLDNLAELSKTHKITRFALFDQFPYTDHMESGVFLEKR</sequence>
<gene>
    <name evidence="1" type="primary">trmA</name>
    <name type="ordered locus">Shal_4154</name>
</gene>
<feature type="chain" id="PRO_1000084042" description="tRNA/tmRNA (uracil-C(5))-methyltransferase">
    <location>
        <begin position="1"/>
        <end position="365"/>
    </location>
</feature>
<feature type="active site" description="Nucleophile" evidence="1">
    <location>
        <position position="323"/>
    </location>
</feature>
<feature type="active site" description="Proton acceptor" evidence="1">
    <location>
        <position position="357"/>
    </location>
</feature>
<feature type="binding site" evidence="1">
    <location>
        <position position="189"/>
    </location>
    <ligand>
        <name>S-adenosyl-L-methionine</name>
        <dbReference type="ChEBI" id="CHEBI:59789"/>
    </ligand>
</feature>
<feature type="binding site" evidence="1">
    <location>
        <position position="217"/>
    </location>
    <ligand>
        <name>S-adenosyl-L-methionine</name>
        <dbReference type="ChEBI" id="CHEBI:59789"/>
    </ligand>
</feature>
<feature type="binding site" evidence="1">
    <location>
        <position position="222"/>
    </location>
    <ligand>
        <name>S-adenosyl-L-methionine</name>
        <dbReference type="ChEBI" id="CHEBI:59789"/>
    </ligand>
</feature>
<feature type="binding site" evidence="1">
    <location>
        <position position="238"/>
    </location>
    <ligand>
        <name>S-adenosyl-L-methionine</name>
        <dbReference type="ChEBI" id="CHEBI:59789"/>
    </ligand>
</feature>
<feature type="binding site" evidence="1">
    <location>
        <position position="298"/>
    </location>
    <ligand>
        <name>S-adenosyl-L-methionine</name>
        <dbReference type="ChEBI" id="CHEBI:59789"/>
    </ligand>
</feature>
<name>TRMA_SHEHH</name>
<reference key="1">
    <citation type="submission" date="2008-01" db="EMBL/GenBank/DDBJ databases">
        <title>Complete sequence of Shewanella halifaxensis HAW-EB4.</title>
        <authorList>
            <consortium name="US DOE Joint Genome Institute"/>
            <person name="Copeland A."/>
            <person name="Lucas S."/>
            <person name="Lapidus A."/>
            <person name="Glavina del Rio T."/>
            <person name="Dalin E."/>
            <person name="Tice H."/>
            <person name="Bruce D."/>
            <person name="Goodwin L."/>
            <person name="Pitluck S."/>
            <person name="Sims D."/>
            <person name="Brettin T."/>
            <person name="Detter J.C."/>
            <person name="Han C."/>
            <person name="Kuske C.R."/>
            <person name="Schmutz J."/>
            <person name="Larimer F."/>
            <person name="Land M."/>
            <person name="Hauser L."/>
            <person name="Kyrpides N."/>
            <person name="Kim E."/>
            <person name="Zhao J.-S."/>
            <person name="Richardson P."/>
        </authorList>
    </citation>
    <scope>NUCLEOTIDE SEQUENCE [LARGE SCALE GENOMIC DNA]</scope>
    <source>
        <strain>HAW-EB4</strain>
    </source>
</reference>
<comment type="function">
    <text evidence="1">Dual-specificity methyltransferase that catalyzes the formation of 5-methyluridine at position 54 (m5U54) in all tRNAs, and that of position 341 (m5U341) in tmRNA (transfer-mRNA).</text>
</comment>
<comment type="catalytic activity">
    <reaction evidence="1">
        <text>uridine(54) in tRNA + S-adenosyl-L-methionine = 5-methyluridine(54) in tRNA + S-adenosyl-L-homocysteine + H(+)</text>
        <dbReference type="Rhea" id="RHEA:42712"/>
        <dbReference type="Rhea" id="RHEA-COMP:10167"/>
        <dbReference type="Rhea" id="RHEA-COMP:10193"/>
        <dbReference type="ChEBI" id="CHEBI:15378"/>
        <dbReference type="ChEBI" id="CHEBI:57856"/>
        <dbReference type="ChEBI" id="CHEBI:59789"/>
        <dbReference type="ChEBI" id="CHEBI:65315"/>
        <dbReference type="ChEBI" id="CHEBI:74447"/>
        <dbReference type="EC" id="2.1.1.35"/>
    </reaction>
</comment>
<comment type="catalytic activity">
    <reaction evidence="1">
        <text>uridine(341) in tmRNA + S-adenosyl-L-methionine = 5-methyluridine(341) in tmRNA + S-adenosyl-L-homocysteine + H(+)</text>
        <dbReference type="Rhea" id="RHEA:43612"/>
        <dbReference type="Rhea" id="RHEA-COMP:10630"/>
        <dbReference type="Rhea" id="RHEA-COMP:10631"/>
        <dbReference type="ChEBI" id="CHEBI:15378"/>
        <dbReference type="ChEBI" id="CHEBI:57856"/>
        <dbReference type="ChEBI" id="CHEBI:59789"/>
        <dbReference type="ChEBI" id="CHEBI:65315"/>
        <dbReference type="ChEBI" id="CHEBI:74447"/>
    </reaction>
</comment>
<comment type="similarity">
    <text evidence="1">Belongs to the class I-like SAM-binding methyltransferase superfamily. RNA M5U methyltransferase family. TrmA subfamily.</text>
</comment>